<feature type="chain" id="PRO_0000115549" description="Small ribosomal subunit protein uS15">
    <location>
        <begin position="1"/>
        <end position="89"/>
    </location>
</feature>
<evidence type="ECO:0000255" key="1">
    <source>
        <dbReference type="HAMAP-Rule" id="MF_01343"/>
    </source>
</evidence>
<evidence type="ECO:0000305" key="2"/>
<gene>
    <name evidence="1" type="primary">rpsO</name>
    <name type="ordered locus">SAK_0265</name>
</gene>
<keyword id="KW-0687">Ribonucleoprotein</keyword>
<keyword id="KW-0689">Ribosomal protein</keyword>
<keyword id="KW-0694">RNA-binding</keyword>
<keyword id="KW-0699">rRNA-binding</keyword>
<dbReference type="EMBL" id="CP000114">
    <property type="protein sequence ID" value="ABA44702.1"/>
    <property type="molecule type" value="Genomic_DNA"/>
</dbReference>
<dbReference type="RefSeq" id="WP_001018249.1">
    <property type="nucleotide sequence ID" value="NC_007432.1"/>
</dbReference>
<dbReference type="SMR" id="Q3K3H0"/>
<dbReference type="GeneID" id="66885178"/>
<dbReference type="KEGG" id="sak:SAK_0265"/>
<dbReference type="HOGENOM" id="CLU_148518_0_0_9"/>
<dbReference type="GO" id="GO:0022627">
    <property type="term" value="C:cytosolic small ribosomal subunit"/>
    <property type="evidence" value="ECO:0007669"/>
    <property type="project" value="TreeGrafter"/>
</dbReference>
<dbReference type="GO" id="GO:0019843">
    <property type="term" value="F:rRNA binding"/>
    <property type="evidence" value="ECO:0007669"/>
    <property type="project" value="UniProtKB-UniRule"/>
</dbReference>
<dbReference type="GO" id="GO:0003735">
    <property type="term" value="F:structural constituent of ribosome"/>
    <property type="evidence" value="ECO:0007669"/>
    <property type="project" value="InterPro"/>
</dbReference>
<dbReference type="GO" id="GO:0006412">
    <property type="term" value="P:translation"/>
    <property type="evidence" value="ECO:0007669"/>
    <property type="project" value="UniProtKB-UniRule"/>
</dbReference>
<dbReference type="CDD" id="cd00353">
    <property type="entry name" value="Ribosomal_S15p_S13e"/>
    <property type="match status" value="1"/>
</dbReference>
<dbReference type="FunFam" id="1.10.287.10:FF:000002">
    <property type="entry name" value="30S ribosomal protein S15"/>
    <property type="match status" value="1"/>
</dbReference>
<dbReference type="Gene3D" id="6.10.250.3130">
    <property type="match status" value="1"/>
</dbReference>
<dbReference type="Gene3D" id="1.10.287.10">
    <property type="entry name" value="S15/NS1, RNA-binding"/>
    <property type="match status" value="1"/>
</dbReference>
<dbReference type="HAMAP" id="MF_01343_B">
    <property type="entry name" value="Ribosomal_uS15_B"/>
    <property type="match status" value="1"/>
</dbReference>
<dbReference type="InterPro" id="IPR000589">
    <property type="entry name" value="Ribosomal_uS15"/>
</dbReference>
<dbReference type="InterPro" id="IPR005290">
    <property type="entry name" value="Ribosomal_uS15_bac-type"/>
</dbReference>
<dbReference type="InterPro" id="IPR009068">
    <property type="entry name" value="uS15_NS1_RNA-bd_sf"/>
</dbReference>
<dbReference type="NCBIfam" id="TIGR00952">
    <property type="entry name" value="S15_bact"/>
    <property type="match status" value="1"/>
</dbReference>
<dbReference type="PANTHER" id="PTHR23321">
    <property type="entry name" value="RIBOSOMAL PROTEIN S15, BACTERIAL AND ORGANELLAR"/>
    <property type="match status" value="1"/>
</dbReference>
<dbReference type="PANTHER" id="PTHR23321:SF26">
    <property type="entry name" value="SMALL RIBOSOMAL SUBUNIT PROTEIN US15M"/>
    <property type="match status" value="1"/>
</dbReference>
<dbReference type="Pfam" id="PF00312">
    <property type="entry name" value="Ribosomal_S15"/>
    <property type="match status" value="1"/>
</dbReference>
<dbReference type="SMART" id="SM01387">
    <property type="entry name" value="Ribosomal_S15"/>
    <property type="match status" value="1"/>
</dbReference>
<dbReference type="SUPFAM" id="SSF47060">
    <property type="entry name" value="S15/NS1 RNA-binding domain"/>
    <property type="match status" value="1"/>
</dbReference>
<dbReference type="PROSITE" id="PS00362">
    <property type="entry name" value="RIBOSOMAL_S15"/>
    <property type="match status" value="1"/>
</dbReference>
<protein>
    <recommendedName>
        <fullName evidence="1">Small ribosomal subunit protein uS15</fullName>
    </recommendedName>
    <alternativeName>
        <fullName evidence="2">30S ribosomal protein S15</fullName>
    </alternativeName>
</protein>
<proteinExistence type="inferred from homology"/>
<reference key="1">
    <citation type="journal article" date="2005" name="Proc. Natl. Acad. Sci. U.S.A.">
        <title>Genome analysis of multiple pathogenic isolates of Streptococcus agalactiae: implications for the microbial 'pan-genome'.</title>
        <authorList>
            <person name="Tettelin H."/>
            <person name="Masignani V."/>
            <person name="Cieslewicz M.J."/>
            <person name="Donati C."/>
            <person name="Medini D."/>
            <person name="Ward N.L."/>
            <person name="Angiuoli S.V."/>
            <person name="Crabtree J."/>
            <person name="Jones A.L."/>
            <person name="Durkin A.S."/>
            <person name="DeBoy R.T."/>
            <person name="Davidsen T.M."/>
            <person name="Mora M."/>
            <person name="Scarselli M."/>
            <person name="Margarit y Ros I."/>
            <person name="Peterson J.D."/>
            <person name="Hauser C.R."/>
            <person name="Sundaram J.P."/>
            <person name="Nelson W.C."/>
            <person name="Madupu R."/>
            <person name="Brinkac L.M."/>
            <person name="Dodson R.J."/>
            <person name="Rosovitz M.J."/>
            <person name="Sullivan S.A."/>
            <person name="Daugherty S.C."/>
            <person name="Haft D.H."/>
            <person name="Selengut J."/>
            <person name="Gwinn M.L."/>
            <person name="Zhou L."/>
            <person name="Zafar N."/>
            <person name="Khouri H."/>
            <person name="Radune D."/>
            <person name="Dimitrov G."/>
            <person name="Watkins K."/>
            <person name="O'Connor K.J."/>
            <person name="Smith S."/>
            <person name="Utterback T.R."/>
            <person name="White O."/>
            <person name="Rubens C.E."/>
            <person name="Grandi G."/>
            <person name="Madoff L.C."/>
            <person name="Kasper D.L."/>
            <person name="Telford J.L."/>
            <person name="Wessels M.R."/>
            <person name="Rappuoli R."/>
            <person name="Fraser C.M."/>
        </authorList>
    </citation>
    <scope>NUCLEOTIDE SEQUENCE [LARGE SCALE GENOMIC DNA]</scope>
    <source>
        <strain>ATCC 27591 / A909 / CDC SS700</strain>
    </source>
</reference>
<sequence length="89" mass="10531">MAISKEKKNEIIAQYARHEGDTGSVEVQVAVLTWEINHLNDHIKQHKKDHATYRGLMKKIGHRRNLLAYLRRTDVNRYRELIQSLGLRR</sequence>
<accession>Q3K3H0</accession>
<comment type="function">
    <text evidence="1">One of the primary rRNA binding proteins, it binds directly to 16S rRNA where it helps nucleate assembly of the platform of the 30S subunit by binding and bridging several RNA helices of the 16S rRNA.</text>
</comment>
<comment type="function">
    <text evidence="1">Forms an intersubunit bridge (bridge B4) with the 23S rRNA of the 50S subunit in the ribosome.</text>
</comment>
<comment type="subunit">
    <text evidence="1">Part of the 30S ribosomal subunit. Forms a bridge to the 50S subunit in the 70S ribosome, contacting the 23S rRNA.</text>
</comment>
<comment type="similarity">
    <text evidence="1">Belongs to the universal ribosomal protein uS15 family.</text>
</comment>
<organism>
    <name type="scientific">Streptococcus agalactiae serotype Ia (strain ATCC 27591 / A909 / CDC SS700)</name>
    <dbReference type="NCBI Taxonomy" id="205921"/>
    <lineage>
        <taxon>Bacteria</taxon>
        <taxon>Bacillati</taxon>
        <taxon>Bacillota</taxon>
        <taxon>Bacilli</taxon>
        <taxon>Lactobacillales</taxon>
        <taxon>Streptococcaceae</taxon>
        <taxon>Streptococcus</taxon>
    </lineage>
</organism>
<name>RS15_STRA1</name>